<proteinExistence type="evidence at transcript level"/>
<feature type="chain" id="PRO_0000290033" description="Programmed cell death protein 2">
    <location>
        <begin position="1"/>
        <end position="344"/>
    </location>
</feature>
<feature type="zinc finger region" description="MYND-type; atypical" evidence="2">
    <location>
        <begin position="135"/>
        <end position="172"/>
    </location>
</feature>
<feature type="binding site" evidence="2">
    <location>
        <position position="135"/>
    </location>
    <ligand>
        <name>Zn(2+)</name>
        <dbReference type="ChEBI" id="CHEBI:29105"/>
        <label>1</label>
    </ligand>
</feature>
<feature type="binding site" evidence="2">
    <location>
        <position position="138"/>
    </location>
    <ligand>
        <name>Zn(2+)</name>
        <dbReference type="ChEBI" id="CHEBI:29105"/>
        <label>1</label>
    </ligand>
</feature>
<feature type="binding site" evidence="2">
    <location>
        <position position="146"/>
    </location>
    <ligand>
        <name>Zn(2+)</name>
        <dbReference type="ChEBI" id="CHEBI:29105"/>
        <label>2</label>
    </ligand>
</feature>
<feature type="binding site" evidence="2">
    <location>
        <position position="149"/>
    </location>
    <ligand>
        <name>Zn(2+)</name>
        <dbReference type="ChEBI" id="CHEBI:29105"/>
        <label>2</label>
    </ligand>
</feature>
<feature type="binding site" evidence="2">
    <location>
        <position position="155"/>
    </location>
    <ligand>
        <name>Zn(2+)</name>
        <dbReference type="ChEBI" id="CHEBI:29105"/>
        <label>1</label>
    </ligand>
</feature>
<feature type="binding site" evidence="2">
    <location>
        <position position="159"/>
    </location>
    <ligand>
        <name>Zn(2+)</name>
        <dbReference type="ChEBI" id="CHEBI:29105"/>
        <label>1</label>
    </ligand>
</feature>
<feature type="binding site" evidence="2">
    <location>
        <position position="168"/>
    </location>
    <ligand>
        <name>Zn(2+)</name>
        <dbReference type="ChEBI" id="CHEBI:29105"/>
        <label>2</label>
    </ligand>
</feature>
<feature type="binding site" evidence="2">
    <location>
        <position position="172"/>
    </location>
    <ligand>
        <name>Zn(2+)</name>
        <dbReference type="ChEBI" id="CHEBI:29105"/>
        <label>2</label>
    </ligand>
</feature>
<comment type="function">
    <text evidence="1">May be a DNA-binding protein with a regulatory function. May play an important role in cell death and/or in regulation of cell proliferation (By similarity).</text>
</comment>
<comment type="subcellular location">
    <subcellularLocation>
        <location evidence="3">Nucleus</location>
    </subcellularLocation>
</comment>
<comment type="PTM">
    <text evidence="1">Ubiquitinated by PRKN, promoting proteasomal degradation.</text>
</comment>
<protein>
    <recommendedName>
        <fullName>Programmed cell death protein 2</fullName>
    </recommendedName>
</protein>
<name>PDCD2_BOVIN</name>
<reference key="1">
    <citation type="submission" date="2005-11" db="EMBL/GenBank/DDBJ databases">
        <authorList>
            <consortium name="NIH - Mammalian Gene Collection (MGC) project"/>
        </authorList>
    </citation>
    <scope>NUCLEOTIDE SEQUENCE [LARGE SCALE MRNA]</scope>
    <source>
        <strain>Crossbred X Angus</strain>
        <tissue>Liver</tissue>
    </source>
</reference>
<gene>
    <name type="primary">PDCD2</name>
</gene>
<sequence>MASESAGPAELGFVEAAPSWRLRSEQFPSKVGGRPAWLSAAGLPGPPELACPLCGRPMAFLLQVYAPLPGRADAFHRCLFLFCCRTPPCCCGLRVFRNQLPRQNDFYSYEPPSEDPPSETGESVYLHLKSGAHLCRVCGCSGPKRCSRCHKAHYCSKEHQSLDWRLGHKQACAQTDNLDNIVPDHNFLFPEFEIVIETEDEIMPEVVERDDESEIIGTMGEAHEEELESMAKHESKEDRIFRKFKTKISLEPEQILRYGRGIAPLWISGENTPKEKDIPDCPCGAKRLFEFQVMPQLLNYLKADRLGRSVDWGVLAIFTCAESCKLGIGYTEEFVWKQDITDAA</sequence>
<evidence type="ECO:0000250" key="1"/>
<evidence type="ECO:0000255" key="2">
    <source>
        <dbReference type="PROSITE-ProRule" id="PRU00134"/>
    </source>
</evidence>
<evidence type="ECO:0000305" key="3"/>
<keyword id="KW-0053">Apoptosis</keyword>
<keyword id="KW-0238">DNA-binding</keyword>
<keyword id="KW-0479">Metal-binding</keyword>
<keyword id="KW-0539">Nucleus</keyword>
<keyword id="KW-1185">Reference proteome</keyword>
<keyword id="KW-0832">Ubl conjugation</keyword>
<keyword id="KW-0862">Zinc</keyword>
<keyword id="KW-0863">Zinc-finger</keyword>
<accession>Q2YDC9</accession>
<organism>
    <name type="scientific">Bos taurus</name>
    <name type="common">Bovine</name>
    <dbReference type="NCBI Taxonomy" id="9913"/>
    <lineage>
        <taxon>Eukaryota</taxon>
        <taxon>Metazoa</taxon>
        <taxon>Chordata</taxon>
        <taxon>Craniata</taxon>
        <taxon>Vertebrata</taxon>
        <taxon>Euteleostomi</taxon>
        <taxon>Mammalia</taxon>
        <taxon>Eutheria</taxon>
        <taxon>Laurasiatheria</taxon>
        <taxon>Artiodactyla</taxon>
        <taxon>Ruminantia</taxon>
        <taxon>Pecora</taxon>
        <taxon>Bovidae</taxon>
        <taxon>Bovinae</taxon>
        <taxon>Bos</taxon>
    </lineage>
</organism>
<dbReference type="EMBL" id="BC110283">
    <property type="protein sequence ID" value="AAI10284.1"/>
    <property type="molecule type" value="mRNA"/>
</dbReference>
<dbReference type="RefSeq" id="NP_001039574.1">
    <property type="nucleotide sequence ID" value="NM_001046109.2"/>
</dbReference>
<dbReference type="FunCoup" id="Q2YDC9">
    <property type="interactions" value="4272"/>
</dbReference>
<dbReference type="STRING" id="9913.ENSBTAP00000014845"/>
<dbReference type="PaxDb" id="9913-ENSBTAP00000014845"/>
<dbReference type="Ensembl" id="ENSBTAT00000014845.3">
    <property type="protein sequence ID" value="ENSBTAP00000014845.2"/>
    <property type="gene ID" value="ENSBTAG00000011179.5"/>
</dbReference>
<dbReference type="GeneID" id="512079"/>
<dbReference type="KEGG" id="bta:512079"/>
<dbReference type="CTD" id="5134"/>
<dbReference type="VEuPathDB" id="HostDB:ENSBTAG00000011179"/>
<dbReference type="VGNC" id="VGNC:32660">
    <property type="gene designation" value="PDCD2"/>
</dbReference>
<dbReference type="eggNOG" id="KOG2061">
    <property type="taxonomic scope" value="Eukaryota"/>
</dbReference>
<dbReference type="GeneTree" id="ENSGT00940000156603"/>
<dbReference type="HOGENOM" id="CLU_034893_2_0_1"/>
<dbReference type="InParanoid" id="Q2YDC9"/>
<dbReference type="OMA" id="HQVIRYS"/>
<dbReference type="OrthoDB" id="443682at2759"/>
<dbReference type="TreeFam" id="TF313722"/>
<dbReference type="Proteomes" id="UP000009136">
    <property type="component" value="Chromosome 9"/>
</dbReference>
<dbReference type="Bgee" id="ENSBTAG00000011179">
    <property type="expression patterns" value="Expressed in oocyte and 112 other cell types or tissues"/>
</dbReference>
<dbReference type="GO" id="GO:0005737">
    <property type="term" value="C:cytoplasm"/>
    <property type="evidence" value="ECO:0007669"/>
    <property type="project" value="InterPro"/>
</dbReference>
<dbReference type="GO" id="GO:0005634">
    <property type="term" value="C:nucleus"/>
    <property type="evidence" value="ECO:0000318"/>
    <property type="project" value="GO_Central"/>
</dbReference>
<dbReference type="GO" id="GO:0003677">
    <property type="term" value="F:DNA binding"/>
    <property type="evidence" value="ECO:0007669"/>
    <property type="project" value="UniProtKB-KW"/>
</dbReference>
<dbReference type="GO" id="GO:0008270">
    <property type="term" value="F:zinc ion binding"/>
    <property type="evidence" value="ECO:0007669"/>
    <property type="project" value="UniProtKB-KW"/>
</dbReference>
<dbReference type="GO" id="GO:0006915">
    <property type="term" value="P:apoptotic process"/>
    <property type="evidence" value="ECO:0007669"/>
    <property type="project" value="UniProtKB-KW"/>
</dbReference>
<dbReference type="FunFam" id="6.10.140.2220:FF:000014">
    <property type="entry name" value="Programmed cell death 2"/>
    <property type="match status" value="1"/>
</dbReference>
<dbReference type="Gene3D" id="6.10.140.2220">
    <property type="match status" value="1"/>
</dbReference>
<dbReference type="InterPro" id="IPR007320">
    <property type="entry name" value="PDCD2_C"/>
</dbReference>
<dbReference type="InterPro" id="IPR002893">
    <property type="entry name" value="Znf_MYND"/>
</dbReference>
<dbReference type="PANTHER" id="PTHR12298">
    <property type="entry name" value="PCDC2 PROGRAMMED CELL DEATH PROTEIN 2 -RELATED"/>
    <property type="match status" value="1"/>
</dbReference>
<dbReference type="PANTHER" id="PTHR12298:SF4">
    <property type="entry name" value="PROGRAMMED CELL DEATH PROTEIN 2"/>
    <property type="match status" value="1"/>
</dbReference>
<dbReference type="Pfam" id="PF04194">
    <property type="entry name" value="PDCD2_C"/>
    <property type="match status" value="1"/>
</dbReference>
<dbReference type="Pfam" id="PF01753">
    <property type="entry name" value="zf-MYND"/>
    <property type="match status" value="1"/>
</dbReference>
<dbReference type="SUPFAM" id="SSF144232">
    <property type="entry name" value="HIT/MYND zinc finger-like"/>
    <property type="match status" value="1"/>
</dbReference>
<dbReference type="PROSITE" id="PS01360">
    <property type="entry name" value="ZF_MYND_1"/>
    <property type="match status" value="1"/>
</dbReference>
<dbReference type="PROSITE" id="PS50865">
    <property type="entry name" value="ZF_MYND_2"/>
    <property type="match status" value="1"/>
</dbReference>